<feature type="initiator methionine" description="Removed" evidence="1">
    <location>
        <position position="1"/>
    </location>
</feature>
<feature type="chain" id="PRO_0000130825" description="Small ribosomal subunit protein eS4">
    <location>
        <begin position="2"/>
        <end position="263"/>
    </location>
</feature>
<feature type="domain" description="S4 RNA-binding">
    <location>
        <begin position="42"/>
        <end position="104"/>
    </location>
</feature>
<organism>
    <name type="scientific">Ictalurus punctatus</name>
    <name type="common">Channel catfish</name>
    <name type="synonym">Silurus punctatus</name>
    <dbReference type="NCBI Taxonomy" id="7998"/>
    <lineage>
        <taxon>Eukaryota</taxon>
        <taxon>Metazoa</taxon>
        <taxon>Chordata</taxon>
        <taxon>Craniata</taxon>
        <taxon>Vertebrata</taxon>
        <taxon>Euteleostomi</taxon>
        <taxon>Actinopterygii</taxon>
        <taxon>Neopterygii</taxon>
        <taxon>Teleostei</taxon>
        <taxon>Ostariophysi</taxon>
        <taxon>Siluriformes</taxon>
        <taxon>Ictaluridae</taxon>
        <taxon>Ictalurus</taxon>
    </lineage>
</organism>
<protein>
    <recommendedName>
        <fullName evidence="2">Small ribosomal subunit protein eS4</fullName>
    </recommendedName>
    <alternativeName>
        <fullName>40S ribosomal protein S4</fullName>
    </alternativeName>
</protein>
<accession>Q90YS0</accession>
<name>RS4_ICTPU</name>
<keyword id="KW-0687">Ribonucleoprotein</keyword>
<keyword id="KW-0689">Ribosomal protein</keyword>
<keyword id="KW-0694">RNA-binding</keyword>
<keyword id="KW-0699">rRNA-binding</keyword>
<proteinExistence type="evidence at transcript level"/>
<reference key="1">
    <citation type="journal article" date="2002" name="Gene">
        <title>Translational machinery of channel catfish: I. A transcriptomic approach to the analysis of 32 40S ribosomal protein genes and their expression.</title>
        <authorList>
            <person name="Karsi A."/>
            <person name="Patterson A."/>
            <person name="Feng J."/>
            <person name="Liu Z.-J."/>
        </authorList>
    </citation>
    <scope>NUCLEOTIDE SEQUENCE [MRNA]</scope>
</reference>
<evidence type="ECO:0000250" key="1"/>
<evidence type="ECO:0000305" key="2"/>
<comment type="similarity">
    <text evidence="2">Belongs to the eukaryotic ribosomal protein eS4 family.</text>
</comment>
<gene>
    <name type="primary">rps4</name>
</gene>
<sequence>MARGPKKHLKRVAAPKHWMLDKLTGVFAPRPSTGPHKLRECLPLIIFLRNRLKYALTGDEVKKICMQRFIKVDGKVRTDITYPAGFMDVISIEKTGENFRLIYDVKGRFTVHRITNEEAKYKLCKVKKILIGTKGIPHLVTHDARTIRYPDPMIKANDTVRIDLETGKITEFIKFDTGNLCMVTGGANLGRIGVITNRERHPGSFDVVHVKDSTGNSFATRLSNIFVIGKGNKAWVSIPRGKGIRLTIAEERDKRLAAKQSSS</sequence>
<dbReference type="EMBL" id="AF402812">
    <property type="protein sequence ID" value="AAK95186.1"/>
    <property type="molecule type" value="mRNA"/>
</dbReference>
<dbReference type="RefSeq" id="NP_001187069.1">
    <property type="nucleotide sequence ID" value="NM_001200140.1"/>
</dbReference>
<dbReference type="SMR" id="Q90YS0"/>
<dbReference type="STRING" id="7998.ENSIPUP00000001218"/>
<dbReference type="GeneID" id="100304558"/>
<dbReference type="KEGG" id="ipu:100304558"/>
<dbReference type="CTD" id="6191"/>
<dbReference type="OMA" id="GHIQLNL"/>
<dbReference type="OrthoDB" id="1109245at2759"/>
<dbReference type="Proteomes" id="UP000221080">
    <property type="component" value="Chromosome 7"/>
</dbReference>
<dbReference type="GO" id="GO:0022627">
    <property type="term" value="C:cytosolic small ribosomal subunit"/>
    <property type="evidence" value="ECO:0007669"/>
    <property type="project" value="TreeGrafter"/>
</dbReference>
<dbReference type="GO" id="GO:0019843">
    <property type="term" value="F:rRNA binding"/>
    <property type="evidence" value="ECO:0007669"/>
    <property type="project" value="UniProtKB-KW"/>
</dbReference>
<dbReference type="GO" id="GO:0003735">
    <property type="term" value="F:structural constituent of ribosome"/>
    <property type="evidence" value="ECO:0007669"/>
    <property type="project" value="InterPro"/>
</dbReference>
<dbReference type="GO" id="GO:0006412">
    <property type="term" value="P:translation"/>
    <property type="evidence" value="ECO:0007669"/>
    <property type="project" value="InterPro"/>
</dbReference>
<dbReference type="CDD" id="cd06087">
    <property type="entry name" value="KOW_RPS4"/>
    <property type="match status" value="1"/>
</dbReference>
<dbReference type="CDD" id="cd00165">
    <property type="entry name" value="S4"/>
    <property type="match status" value="1"/>
</dbReference>
<dbReference type="FunFam" id="2.30.30.30:FF:000005">
    <property type="entry name" value="40S ribosomal protein S4"/>
    <property type="match status" value="1"/>
</dbReference>
<dbReference type="FunFam" id="2.40.50.740:FF:000001">
    <property type="entry name" value="40S ribosomal protein S4"/>
    <property type="match status" value="1"/>
</dbReference>
<dbReference type="FunFam" id="3.10.290.10:FF:000051">
    <property type="entry name" value="40S ribosomal protein S4, X isoform"/>
    <property type="match status" value="1"/>
</dbReference>
<dbReference type="Gene3D" id="2.30.30.30">
    <property type="match status" value="1"/>
</dbReference>
<dbReference type="Gene3D" id="2.40.50.740">
    <property type="match status" value="1"/>
</dbReference>
<dbReference type="Gene3D" id="3.10.290.10">
    <property type="entry name" value="RNA-binding S4 domain"/>
    <property type="match status" value="1"/>
</dbReference>
<dbReference type="HAMAP" id="MF_00485">
    <property type="entry name" value="Ribosomal_eS4"/>
    <property type="match status" value="1"/>
</dbReference>
<dbReference type="InterPro" id="IPR005824">
    <property type="entry name" value="KOW"/>
</dbReference>
<dbReference type="InterPro" id="IPR014722">
    <property type="entry name" value="Rib_uL2_dom2"/>
</dbReference>
<dbReference type="InterPro" id="IPR000876">
    <property type="entry name" value="Ribosomal_eS4"/>
</dbReference>
<dbReference type="InterPro" id="IPR032277">
    <property type="entry name" value="Ribosomal_eS4_C"/>
</dbReference>
<dbReference type="InterPro" id="IPR013845">
    <property type="entry name" value="Ribosomal_eS4_central_region"/>
</dbReference>
<dbReference type="InterPro" id="IPR038237">
    <property type="entry name" value="Ribosomal_eS4_central_sf"/>
</dbReference>
<dbReference type="InterPro" id="IPR041982">
    <property type="entry name" value="Ribosomal_eS4_KOW"/>
</dbReference>
<dbReference type="InterPro" id="IPR013843">
    <property type="entry name" value="Ribosomal_eS4_N"/>
</dbReference>
<dbReference type="InterPro" id="IPR018199">
    <property type="entry name" value="Ribosomal_eS4_N_CS"/>
</dbReference>
<dbReference type="InterPro" id="IPR002942">
    <property type="entry name" value="S4_RNA-bd"/>
</dbReference>
<dbReference type="InterPro" id="IPR036986">
    <property type="entry name" value="S4_RNA-bd_sf"/>
</dbReference>
<dbReference type="PANTHER" id="PTHR11581">
    <property type="entry name" value="30S/40S RIBOSOMAL PROTEIN S4"/>
    <property type="match status" value="1"/>
</dbReference>
<dbReference type="PANTHER" id="PTHR11581:SF0">
    <property type="entry name" value="SMALL RIBOSOMAL SUBUNIT PROTEIN ES4"/>
    <property type="match status" value="1"/>
</dbReference>
<dbReference type="Pfam" id="PF16121">
    <property type="entry name" value="40S_S4_C"/>
    <property type="match status" value="1"/>
</dbReference>
<dbReference type="Pfam" id="PF00467">
    <property type="entry name" value="KOW"/>
    <property type="match status" value="1"/>
</dbReference>
<dbReference type="Pfam" id="PF00900">
    <property type="entry name" value="Ribosomal_S4e"/>
    <property type="match status" value="1"/>
</dbReference>
<dbReference type="Pfam" id="PF08071">
    <property type="entry name" value="RS4NT"/>
    <property type="match status" value="1"/>
</dbReference>
<dbReference type="Pfam" id="PF01479">
    <property type="entry name" value="S4"/>
    <property type="match status" value="1"/>
</dbReference>
<dbReference type="PIRSF" id="PIRSF002116">
    <property type="entry name" value="Ribosomal_S4"/>
    <property type="match status" value="1"/>
</dbReference>
<dbReference type="SMART" id="SM00363">
    <property type="entry name" value="S4"/>
    <property type="match status" value="1"/>
</dbReference>
<dbReference type="PROSITE" id="PS00528">
    <property type="entry name" value="RIBOSOMAL_S4E"/>
    <property type="match status" value="1"/>
</dbReference>
<dbReference type="PROSITE" id="PS50889">
    <property type="entry name" value="S4"/>
    <property type="match status" value="1"/>
</dbReference>